<dbReference type="EC" id="1.3.1.-" evidence="1"/>
<dbReference type="EMBL" id="AL157959">
    <property type="protein sequence ID" value="CAM08407.1"/>
    <property type="molecule type" value="Genomic_DNA"/>
</dbReference>
<dbReference type="PIR" id="H81888">
    <property type="entry name" value="H81888"/>
</dbReference>
<dbReference type="RefSeq" id="WP_002246154.1">
    <property type="nucleotide sequence ID" value="NC_003116.1"/>
</dbReference>
<dbReference type="SMR" id="Q9JUP6"/>
<dbReference type="EnsemblBacteria" id="CAM08407">
    <property type="protein sequence ID" value="CAM08407"/>
    <property type="gene ID" value="NMA1207"/>
</dbReference>
<dbReference type="KEGG" id="nma:NMA1207"/>
<dbReference type="HOGENOM" id="CLU_013299_0_4_4"/>
<dbReference type="Proteomes" id="UP000000626">
    <property type="component" value="Chromosome"/>
</dbReference>
<dbReference type="GO" id="GO:0050660">
    <property type="term" value="F:flavin adenine dinucleotide binding"/>
    <property type="evidence" value="ECO:0007669"/>
    <property type="project" value="InterPro"/>
</dbReference>
<dbReference type="GO" id="GO:0010181">
    <property type="term" value="F:FMN binding"/>
    <property type="evidence" value="ECO:0007669"/>
    <property type="project" value="UniProtKB-UniRule"/>
</dbReference>
<dbReference type="GO" id="GO:0000049">
    <property type="term" value="F:tRNA binding"/>
    <property type="evidence" value="ECO:0007669"/>
    <property type="project" value="UniProtKB-UniRule"/>
</dbReference>
<dbReference type="GO" id="GO:0102262">
    <property type="term" value="F:tRNA-dihydrouridine16 synthase activity"/>
    <property type="evidence" value="ECO:0007669"/>
    <property type="project" value="RHEA"/>
</dbReference>
<dbReference type="CDD" id="cd02801">
    <property type="entry name" value="DUS_like_FMN"/>
    <property type="match status" value="1"/>
</dbReference>
<dbReference type="Gene3D" id="3.20.20.70">
    <property type="entry name" value="Aldolase class I"/>
    <property type="match status" value="1"/>
</dbReference>
<dbReference type="Gene3D" id="1.20.225.30">
    <property type="entry name" value="Dihydrouridine synthase, C-terminal recognition domain"/>
    <property type="match status" value="1"/>
</dbReference>
<dbReference type="HAMAP" id="MF_02043">
    <property type="entry name" value="DusC_subfam"/>
    <property type="match status" value="1"/>
</dbReference>
<dbReference type="InterPro" id="IPR013785">
    <property type="entry name" value="Aldolase_TIM"/>
</dbReference>
<dbReference type="InterPro" id="IPR035587">
    <property type="entry name" value="DUS-like_FMN-bd"/>
</dbReference>
<dbReference type="InterPro" id="IPR001269">
    <property type="entry name" value="DUS_fam"/>
</dbReference>
<dbReference type="InterPro" id="IPR032886">
    <property type="entry name" value="DusC"/>
</dbReference>
<dbReference type="InterPro" id="IPR042270">
    <property type="entry name" value="DusC_C"/>
</dbReference>
<dbReference type="InterPro" id="IPR018517">
    <property type="entry name" value="tRNA_hU_synthase_CS"/>
</dbReference>
<dbReference type="PANTHER" id="PTHR11082">
    <property type="entry name" value="TRNA-DIHYDROURIDINE SYNTHASE"/>
    <property type="match status" value="1"/>
</dbReference>
<dbReference type="PANTHER" id="PTHR11082:SF26">
    <property type="entry name" value="TRNA-DIHYDROURIDINE(16) SYNTHASE"/>
    <property type="match status" value="1"/>
</dbReference>
<dbReference type="Pfam" id="PF01207">
    <property type="entry name" value="Dus"/>
    <property type="match status" value="1"/>
</dbReference>
<dbReference type="PIRSF" id="PIRSF006621">
    <property type="entry name" value="Dus"/>
    <property type="match status" value="1"/>
</dbReference>
<dbReference type="SUPFAM" id="SSF51395">
    <property type="entry name" value="FMN-linked oxidoreductases"/>
    <property type="match status" value="1"/>
</dbReference>
<dbReference type="PROSITE" id="PS01136">
    <property type="entry name" value="UPF0034"/>
    <property type="match status" value="1"/>
</dbReference>
<accession>Q9JUP6</accession>
<accession>A1IRL9</accession>
<reference key="1">
    <citation type="journal article" date="2000" name="Nature">
        <title>Complete DNA sequence of a serogroup A strain of Neisseria meningitidis Z2491.</title>
        <authorList>
            <person name="Parkhill J."/>
            <person name="Achtman M."/>
            <person name="James K.D."/>
            <person name="Bentley S.D."/>
            <person name="Churcher C.M."/>
            <person name="Klee S.R."/>
            <person name="Morelli G."/>
            <person name="Basham D."/>
            <person name="Brown D."/>
            <person name="Chillingworth T."/>
            <person name="Davies R.M."/>
            <person name="Davis P."/>
            <person name="Devlin K."/>
            <person name="Feltwell T."/>
            <person name="Hamlin N."/>
            <person name="Holroyd S."/>
            <person name="Jagels K."/>
            <person name="Leather S."/>
            <person name="Moule S."/>
            <person name="Mungall K.L."/>
            <person name="Quail M.A."/>
            <person name="Rajandream M.A."/>
            <person name="Rutherford K.M."/>
            <person name="Simmonds M."/>
            <person name="Skelton J."/>
            <person name="Whitehead S."/>
            <person name="Spratt B.G."/>
            <person name="Barrell B.G."/>
        </authorList>
    </citation>
    <scope>NUCLEOTIDE SEQUENCE [LARGE SCALE GENOMIC DNA]</scope>
    <source>
        <strain>DSM 15465 / Z2491</strain>
    </source>
</reference>
<organism>
    <name type="scientific">Neisseria meningitidis serogroup A / serotype 4A (strain DSM 15465 / Z2491)</name>
    <dbReference type="NCBI Taxonomy" id="122587"/>
    <lineage>
        <taxon>Bacteria</taxon>
        <taxon>Pseudomonadati</taxon>
        <taxon>Pseudomonadota</taxon>
        <taxon>Betaproteobacteria</taxon>
        <taxon>Neisseriales</taxon>
        <taxon>Neisseriaceae</taxon>
        <taxon>Neisseria</taxon>
    </lineage>
</organism>
<feature type="chain" id="PRO_0000162114" description="tRNA-dihydrouridine(16) synthase">
    <location>
        <begin position="1"/>
        <end position="333"/>
    </location>
</feature>
<feature type="active site" description="Proton donor" evidence="1">
    <location>
        <position position="110"/>
    </location>
</feature>
<feature type="binding site" evidence="1">
    <location>
        <begin position="19"/>
        <end position="21"/>
    </location>
    <ligand>
        <name>FMN</name>
        <dbReference type="ChEBI" id="CHEBI:58210"/>
    </ligand>
</feature>
<feature type="binding site" evidence="1">
    <location>
        <position position="80"/>
    </location>
    <ligand>
        <name>FMN</name>
        <dbReference type="ChEBI" id="CHEBI:58210"/>
    </ligand>
</feature>
<feature type="binding site" evidence="1">
    <location>
        <position position="151"/>
    </location>
    <ligand>
        <name>FMN</name>
        <dbReference type="ChEBI" id="CHEBI:58210"/>
    </ligand>
</feature>
<feature type="binding site" evidence="1">
    <location>
        <begin position="211"/>
        <end position="213"/>
    </location>
    <ligand>
        <name>FMN</name>
        <dbReference type="ChEBI" id="CHEBI:58210"/>
    </ligand>
</feature>
<feature type="binding site" evidence="1">
    <location>
        <begin position="235"/>
        <end position="236"/>
    </location>
    <ligand>
        <name>FMN</name>
        <dbReference type="ChEBI" id="CHEBI:58210"/>
    </ligand>
</feature>
<feature type="site" description="Interacts with tRNA; defines subfamily-specific binding signature" evidence="1">
    <location>
        <position position="47"/>
    </location>
</feature>
<feature type="site" description="Interacts with tRNA" evidence="1">
    <location>
        <position position="107"/>
    </location>
</feature>
<feature type="site" description="Interacts with tRNA" evidence="1">
    <location>
        <position position="188"/>
    </location>
</feature>
<feature type="site" description="Interacts with tRNA; defines subfamily-specific binding signature" evidence="1">
    <location>
        <position position="289"/>
    </location>
</feature>
<feature type="site" description="Interacts with tRNA; defines subfamily-specific binding signature" evidence="1">
    <location>
        <position position="291"/>
    </location>
</feature>
<feature type="site" description="Interacts with tRNA; defines subfamily-specific binding signature" evidence="1">
    <location>
        <position position="312"/>
    </location>
</feature>
<proteinExistence type="inferred from homology"/>
<gene>
    <name evidence="1" type="primary">dusC</name>
    <name type="ordered locus">NMA1207</name>
</gene>
<evidence type="ECO:0000255" key="1">
    <source>
        <dbReference type="HAMAP-Rule" id="MF_02043"/>
    </source>
</evidence>
<protein>
    <recommendedName>
        <fullName evidence="1">tRNA-dihydrouridine(16) synthase</fullName>
        <ecNumber evidence="1">1.3.1.-</ecNumber>
    </recommendedName>
    <alternativeName>
        <fullName evidence="1">U16-specific dihydrouridine synthase</fullName>
        <shortName evidence="1">U16-specific Dus</shortName>
    </alternativeName>
    <alternativeName>
        <fullName evidence="1">tRNA-dihydrouridine synthase C</fullName>
    </alternativeName>
</protein>
<sequence>MIDGQTTEPKQKTRIILAPMQGLVDDVMRDLLTRIGGYDECVSEFVRITHTVHSRATWLKYVPEIANGNKTFSGTPCTVQLLGSDADNMAANALEAVRFGADKIDLNFGCPAPTVNRHKGGAILLKEPELIFHIVKTLRERLPAHIPLTAKMRLGYEDKSPALECACAIAEGGACGLTVHARTKAEGYEPPAHWEWIRKIRDSVDIPVTANGDVFSLQDYIGIKTISGCNSVMLGRGAVIRPDLARQIKQYENGGPVKDTDFAEVSKWIRQFFELCLTKEANNKYPIARLKQWLGMMKKTFDPAQTLFDRVRTVKDADEVRRILNAFEHEINV</sequence>
<keyword id="KW-0285">Flavoprotein</keyword>
<keyword id="KW-0288">FMN</keyword>
<keyword id="KW-0521">NADP</keyword>
<keyword id="KW-0560">Oxidoreductase</keyword>
<keyword id="KW-0694">RNA-binding</keyword>
<keyword id="KW-0819">tRNA processing</keyword>
<keyword id="KW-0820">tRNA-binding</keyword>
<comment type="function">
    <text evidence="1">Catalyzes the synthesis of 5,6-dihydrouridine (D), a modified base found in the D-loop of most tRNAs, via the reduction of the C5-C6 double bond in target uridines. Specifically modifies U16 in tRNAs.</text>
</comment>
<comment type="catalytic activity">
    <reaction evidence="1">
        <text>5,6-dihydrouridine(16) in tRNA + NADP(+) = uridine(16) in tRNA + NADPH + H(+)</text>
        <dbReference type="Rhea" id="RHEA:53376"/>
        <dbReference type="Rhea" id="RHEA-COMP:13543"/>
        <dbReference type="Rhea" id="RHEA-COMP:13544"/>
        <dbReference type="ChEBI" id="CHEBI:15378"/>
        <dbReference type="ChEBI" id="CHEBI:57783"/>
        <dbReference type="ChEBI" id="CHEBI:58349"/>
        <dbReference type="ChEBI" id="CHEBI:65315"/>
        <dbReference type="ChEBI" id="CHEBI:74443"/>
    </reaction>
</comment>
<comment type="catalytic activity">
    <reaction evidence="1">
        <text>5,6-dihydrouridine(16) in tRNA + NAD(+) = uridine(16) in tRNA + NADH + H(+)</text>
        <dbReference type="Rhea" id="RHEA:53380"/>
        <dbReference type="Rhea" id="RHEA-COMP:13543"/>
        <dbReference type="Rhea" id="RHEA-COMP:13544"/>
        <dbReference type="ChEBI" id="CHEBI:15378"/>
        <dbReference type="ChEBI" id="CHEBI:57540"/>
        <dbReference type="ChEBI" id="CHEBI:57945"/>
        <dbReference type="ChEBI" id="CHEBI:65315"/>
        <dbReference type="ChEBI" id="CHEBI:74443"/>
    </reaction>
</comment>
<comment type="cofactor">
    <cofactor evidence="1">
        <name>FMN</name>
        <dbReference type="ChEBI" id="CHEBI:58210"/>
    </cofactor>
</comment>
<comment type="similarity">
    <text evidence="1">Belongs to the Dus family. DusC subfamily.</text>
</comment>
<name>DUSC_NEIMA</name>